<evidence type="ECO:0000255" key="1">
    <source>
        <dbReference type="HAMAP-Rule" id="MF_00090"/>
    </source>
</evidence>
<dbReference type="EC" id="2.1.1.77" evidence="1"/>
<dbReference type="EMBL" id="CP000948">
    <property type="protein sequence ID" value="ACB03860.1"/>
    <property type="molecule type" value="Genomic_DNA"/>
</dbReference>
<dbReference type="RefSeq" id="WP_000254708.1">
    <property type="nucleotide sequence ID" value="NC_010473.1"/>
</dbReference>
<dbReference type="SMR" id="B1XCR9"/>
<dbReference type="GeneID" id="93779263"/>
<dbReference type="KEGG" id="ecd:ECDH10B_2911"/>
<dbReference type="HOGENOM" id="CLU_055432_2_0_6"/>
<dbReference type="GO" id="GO:0005737">
    <property type="term" value="C:cytoplasm"/>
    <property type="evidence" value="ECO:0007669"/>
    <property type="project" value="UniProtKB-SubCell"/>
</dbReference>
<dbReference type="GO" id="GO:0004719">
    <property type="term" value="F:protein-L-isoaspartate (D-aspartate) O-methyltransferase activity"/>
    <property type="evidence" value="ECO:0007669"/>
    <property type="project" value="UniProtKB-UniRule"/>
</dbReference>
<dbReference type="GO" id="GO:0032259">
    <property type="term" value="P:methylation"/>
    <property type="evidence" value="ECO:0007669"/>
    <property type="project" value="UniProtKB-KW"/>
</dbReference>
<dbReference type="GO" id="GO:0036211">
    <property type="term" value="P:protein modification process"/>
    <property type="evidence" value="ECO:0007669"/>
    <property type="project" value="UniProtKB-UniRule"/>
</dbReference>
<dbReference type="GO" id="GO:0030091">
    <property type="term" value="P:protein repair"/>
    <property type="evidence" value="ECO:0007669"/>
    <property type="project" value="UniProtKB-UniRule"/>
</dbReference>
<dbReference type="CDD" id="cd02440">
    <property type="entry name" value="AdoMet_MTases"/>
    <property type="match status" value="1"/>
</dbReference>
<dbReference type="FunFam" id="3.40.50.150:FF:000010">
    <property type="entry name" value="Protein-L-isoaspartate O-methyltransferase"/>
    <property type="match status" value="1"/>
</dbReference>
<dbReference type="Gene3D" id="3.40.50.150">
    <property type="entry name" value="Vaccinia Virus protein VP39"/>
    <property type="match status" value="1"/>
</dbReference>
<dbReference type="HAMAP" id="MF_00090">
    <property type="entry name" value="PIMT"/>
    <property type="match status" value="1"/>
</dbReference>
<dbReference type="InterPro" id="IPR000682">
    <property type="entry name" value="PCMT"/>
</dbReference>
<dbReference type="InterPro" id="IPR029063">
    <property type="entry name" value="SAM-dependent_MTases_sf"/>
</dbReference>
<dbReference type="NCBIfam" id="TIGR00080">
    <property type="entry name" value="pimt"/>
    <property type="match status" value="1"/>
</dbReference>
<dbReference type="NCBIfam" id="NF001453">
    <property type="entry name" value="PRK00312.1"/>
    <property type="match status" value="1"/>
</dbReference>
<dbReference type="PANTHER" id="PTHR11579">
    <property type="entry name" value="PROTEIN-L-ISOASPARTATE O-METHYLTRANSFERASE"/>
    <property type="match status" value="1"/>
</dbReference>
<dbReference type="PANTHER" id="PTHR11579:SF0">
    <property type="entry name" value="PROTEIN-L-ISOASPARTATE(D-ASPARTATE) O-METHYLTRANSFERASE"/>
    <property type="match status" value="1"/>
</dbReference>
<dbReference type="Pfam" id="PF01135">
    <property type="entry name" value="PCMT"/>
    <property type="match status" value="1"/>
</dbReference>
<dbReference type="SUPFAM" id="SSF53335">
    <property type="entry name" value="S-adenosyl-L-methionine-dependent methyltransferases"/>
    <property type="match status" value="1"/>
</dbReference>
<dbReference type="PROSITE" id="PS01279">
    <property type="entry name" value="PCMT"/>
    <property type="match status" value="1"/>
</dbReference>
<name>PIMT_ECODH</name>
<proteinExistence type="inferred from homology"/>
<comment type="function">
    <text evidence="1">Catalyzes the methyl esterification of L-isoaspartyl residues in peptides and proteins that result from spontaneous decomposition of normal L-aspartyl and L-asparaginyl residues. It plays a role in the repair and/or degradation of damaged proteins.</text>
</comment>
<comment type="catalytic activity">
    <reaction evidence="1">
        <text>[protein]-L-isoaspartate + S-adenosyl-L-methionine = [protein]-L-isoaspartate alpha-methyl ester + S-adenosyl-L-homocysteine</text>
        <dbReference type="Rhea" id="RHEA:12705"/>
        <dbReference type="Rhea" id="RHEA-COMP:12143"/>
        <dbReference type="Rhea" id="RHEA-COMP:12144"/>
        <dbReference type="ChEBI" id="CHEBI:57856"/>
        <dbReference type="ChEBI" id="CHEBI:59789"/>
        <dbReference type="ChEBI" id="CHEBI:90596"/>
        <dbReference type="ChEBI" id="CHEBI:90598"/>
        <dbReference type="EC" id="2.1.1.77"/>
    </reaction>
</comment>
<comment type="subcellular location">
    <subcellularLocation>
        <location evidence="1">Cytoplasm</location>
    </subcellularLocation>
</comment>
<comment type="similarity">
    <text evidence="1">Belongs to the methyltransferase superfamily. L-isoaspartyl/D-aspartyl protein methyltransferase family.</text>
</comment>
<keyword id="KW-0963">Cytoplasm</keyword>
<keyword id="KW-0489">Methyltransferase</keyword>
<keyword id="KW-0949">S-adenosyl-L-methionine</keyword>
<keyword id="KW-0808">Transferase</keyword>
<protein>
    <recommendedName>
        <fullName evidence="1">Protein-L-isoaspartate O-methyltransferase</fullName>
        <ecNumber evidence="1">2.1.1.77</ecNumber>
    </recommendedName>
    <alternativeName>
        <fullName evidence="1">L-isoaspartyl protein carboxyl methyltransferase</fullName>
    </alternativeName>
    <alternativeName>
        <fullName evidence="1">Protein L-isoaspartyl methyltransferase</fullName>
    </alternativeName>
    <alternativeName>
        <fullName evidence="1">Protein-beta-aspartate methyltransferase</fullName>
        <shortName evidence="1">PIMT</shortName>
    </alternativeName>
</protein>
<organism>
    <name type="scientific">Escherichia coli (strain K12 / DH10B)</name>
    <dbReference type="NCBI Taxonomy" id="316385"/>
    <lineage>
        <taxon>Bacteria</taxon>
        <taxon>Pseudomonadati</taxon>
        <taxon>Pseudomonadota</taxon>
        <taxon>Gammaproteobacteria</taxon>
        <taxon>Enterobacterales</taxon>
        <taxon>Enterobacteriaceae</taxon>
        <taxon>Escherichia</taxon>
    </lineage>
</organism>
<accession>B1XCR9</accession>
<sequence length="208" mass="23258">MVSRRVQALLDQLRAQGIQDEQVLNALAAVPREKFVDEAFEQKAWDNIALPIGQGQTISQPYMVARMTELLELTPQSRVLEIGTGSGYQTAILAHLVQHVCSVERIKGLQWQARRRLKNLDLHNVSTRHGDGWQGWQARAPFDAIIVTAAPPEIPTALMTQLDEGGILVLPVGEEHQYLKRVRRRGGEFIIDTVEAVRFVPLVKGELA</sequence>
<reference key="1">
    <citation type="journal article" date="2008" name="J. Bacteriol.">
        <title>The complete genome sequence of Escherichia coli DH10B: insights into the biology of a laboratory workhorse.</title>
        <authorList>
            <person name="Durfee T."/>
            <person name="Nelson R."/>
            <person name="Baldwin S."/>
            <person name="Plunkett G. III"/>
            <person name="Burland V."/>
            <person name="Mau B."/>
            <person name="Petrosino J.F."/>
            <person name="Qin X."/>
            <person name="Muzny D.M."/>
            <person name="Ayele M."/>
            <person name="Gibbs R.A."/>
            <person name="Csorgo B."/>
            <person name="Posfai G."/>
            <person name="Weinstock G.M."/>
            <person name="Blattner F.R."/>
        </authorList>
    </citation>
    <scope>NUCLEOTIDE SEQUENCE [LARGE SCALE GENOMIC DNA]</scope>
    <source>
        <strain>K12 / DH10B</strain>
    </source>
</reference>
<gene>
    <name evidence="1" type="primary">pcm</name>
    <name type="ordered locus">ECDH10B_2911</name>
</gene>
<feature type="chain" id="PRO_0000351856" description="Protein-L-isoaspartate O-methyltransferase">
    <location>
        <begin position="1"/>
        <end position="208"/>
    </location>
</feature>
<feature type="active site" evidence="1">
    <location>
        <position position="59"/>
    </location>
</feature>